<comment type="catalytic activity">
    <reaction evidence="1">
        <text>tRNA(Arg) + L-arginine + ATP = L-arginyl-tRNA(Arg) + AMP + diphosphate</text>
        <dbReference type="Rhea" id="RHEA:20301"/>
        <dbReference type="Rhea" id="RHEA-COMP:9658"/>
        <dbReference type="Rhea" id="RHEA-COMP:9673"/>
        <dbReference type="ChEBI" id="CHEBI:30616"/>
        <dbReference type="ChEBI" id="CHEBI:32682"/>
        <dbReference type="ChEBI" id="CHEBI:33019"/>
        <dbReference type="ChEBI" id="CHEBI:78442"/>
        <dbReference type="ChEBI" id="CHEBI:78513"/>
        <dbReference type="ChEBI" id="CHEBI:456215"/>
        <dbReference type="EC" id="6.1.1.19"/>
    </reaction>
</comment>
<comment type="subcellular location">
    <subcellularLocation>
        <location evidence="1">Cytoplasm</location>
    </subcellularLocation>
</comment>
<comment type="similarity">
    <text evidence="1">Belongs to the class-I aminoacyl-tRNA synthetase family.</text>
</comment>
<proteinExistence type="inferred from homology"/>
<feature type="chain" id="PRO_0000242130" description="Arginine--tRNA ligase">
    <location>
        <begin position="1"/>
        <end position="569"/>
    </location>
</feature>
<feature type="short sequence motif" description="'HIGH' region">
    <location>
        <begin position="123"/>
        <end position="133"/>
    </location>
</feature>
<dbReference type="EC" id="6.1.1.19" evidence="1"/>
<dbReference type="EMBL" id="CP000099">
    <property type="protein sequence ID" value="AAZ69976.1"/>
    <property type="molecule type" value="Genomic_DNA"/>
</dbReference>
<dbReference type="SMR" id="Q46DR6"/>
<dbReference type="STRING" id="269797.Mbar_A1008"/>
<dbReference type="PaxDb" id="269797-Mbar_A1008"/>
<dbReference type="KEGG" id="mba:Mbar_A1008"/>
<dbReference type="eggNOG" id="arCOG00487">
    <property type="taxonomic scope" value="Archaea"/>
</dbReference>
<dbReference type="HOGENOM" id="CLU_006406_6_1_2"/>
<dbReference type="OrthoDB" id="372102at2157"/>
<dbReference type="GO" id="GO:0005737">
    <property type="term" value="C:cytoplasm"/>
    <property type="evidence" value="ECO:0007669"/>
    <property type="project" value="UniProtKB-SubCell"/>
</dbReference>
<dbReference type="GO" id="GO:0004814">
    <property type="term" value="F:arginine-tRNA ligase activity"/>
    <property type="evidence" value="ECO:0007669"/>
    <property type="project" value="UniProtKB-UniRule"/>
</dbReference>
<dbReference type="GO" id="GO:0005524">
    <property type="term" value="F:ATP binding"/>
    <property type="evidence" value="ECO:0007669"/>
    <property type="project" value="UniProtKB-UniRule"/>
</dbReference>
<dbReference type="GO" id="GO:0006420">
    <property type="term" value="P:arginyl-tRNA aminoacylation"/>
    <property type="evidence" value="ECO:0007669"/>
    <property type="project" value="UniProtKB-UniRule"/>
</dbReference>
<dbReference type="CDD" id="cd07956">
    <property type="entry name" value="Anticodon_Ia_Arg"/>
    <property type="match status" value="1"/>
</dbReference>
<dbReference type="CDD" id="cd00671">
    <property type="entry name" value="ArgRS_core"/>
    <property type="match status" value="1"/>
</dbReference>
<dbReference type="FunFam" id="1.10.730.10:FF:000008">
    <property type="entry name" value="Arginine--tRNA ligase"/>
    <property type="match status" value="1"/>
</dbReference>
<dbReference type="FunFam" id="3.40.50.620:FF:000190">
    <property type="entry name" value="Arginine--tRNA ligase"/>
    <property type="match status" value="1"/>
</dbReference>
<dbReference type="Gene3D" id="3.30.1360.70">
    <property type="entry name" value="Arginyl tRNA synthetase N-terminal domain"/>
    <property type="match status" value="1"/>
</dbReference>
<dbReference type="Gene3D" id="3.40.50.620">
    <property type="entry name" value="HUPs"/>
    <property type="match status" value="1"/>
</dbReference>
<dbReference type="Gene3D" id="1.10.730.10">
    <property type="entry name" value="Isoleucyl-tRNA Synthetase, Domain 1"/>
    <property type="match status" value="1"/>
</dbReference>
<dbReference type="HAMAP" id="MF_00123">
    <property type="entry name" value="Arg_tRNA_synth"/>
    <property type="match status" value="1"/>
</dbReference>
<dbReference type="InterPro" id="IPR001412">
    <property type="entry name" value="aa-tRNA-synth_I_CS"/>
</dbReference>
<dbReference type="InterPro" id="IPR001278">
    <property type="entry name" value="Arg-tRNA-ligase"/>
</dbReference>
<dbReference type="InterPro" id="IPR005148">
    <property type="entry name" value="Arg-tRNA-synth_N"/>
</dbReference>
<dbReference type="InterPro" id="IPR036695">
    <property type="entry name" value="Arg-tRNA-synth_N_sf"/>
</dbReference>
<dbReference type="InterPro" id="IPR035684">
    <property type="entry name" value="ArgRS_core"/>
</dbReference>
<dbReference type="InterPro" id="IPR008909">
    <property type="entry name" value="DALR_anticod-bd"/>
</dbReference>
<dbReference type="InterPro" id="IPR014729">
    <property type="entry name" value="Rossmann-like_a/b/a_fold"/>
</dbReference>
<dbReference type="InterPro" id="IPR009080">
    <property type="entry name" value="tRNAsynth_Ia_anticodon-bd"/>
</dbReference>
<dbReference type="NCBIfam" id="TIGR00456">
    <property type="entry name" value="argS"/>
    <property type="match status" value="1"/>
</dbReference>
<dbReference type="PANTHER" id="PTHR11956:SF5">
    <property type="entry name" value="ARGININE--TRNA LIGASE, CYTOPLASMIC"/>
    <property type="match status" value="1"/>
</dbReference>
<dbReference type="PANTHER" id="PTHR11956">
    <property type="entry name" value="ARGINYL-TRNA SYNTHETASE"/>
    <property type="match status" value="1"/>
</dbReference>
<dbReference type="Pfam" id="PF03485">
    <property type="entry name" value="Arg_tRNA_synt_N"/>
    <property type="match status" value="1"/>
</dbReference>
<dbReference type="Pfam" id="PF05746">
    <property type="entry name" value="DALR_1"/>
    <property type="match status" value="1"/>
</dbReference>
<dbReference type="Pfam" id="PF00750">
    <property type="entry name" value="tRNA-synt_1d"/>
    <property type="match status" value="1"/>
</dbReference>
<dbReference type="PRINTS" id="PR01038">
    <property type="entry name" value="TRNASYNTHARG"/>
</dbReference>
<dbReference type="SMART" id="SM01016">
    <property type="entry name" value="Arg_tRNA_synt_N"/>
    <property type="match status" value="1"/>
</dbReference>
<dbReference type="SMART" id="SM00836">
    <property type="entry name" value="DALR_1"/>
    <property type="match status" value="1"/>
</dbReference>
<dbReference type="SUPFAM" id="SSF47323">
    <property type="entry name" value="Anticodon-binding domain of a subclass of class I aminoacyl-tRNA synthetases"/>
    <property type="match status" value="1"/>
</dbReference>
<dbReference type="SUPFAM" id="SSF55190">
    <property type="entry name" value="Arginyl-tRNA synthetase (ArgRS), N-terminal 'additional' domain"/>
    <property type="match status" value="1"/>
</dbReference>
<dbReference type="SUPFAM" id="SSF52374">
    <property type="entry name" value="Nucleotidylyl transferase"/>
    <property type="match status" value="1"/>
</dbReference>
<dbReference type="PROSITE" id="PS00178">
    <property type="entry name" value="AA_TRNA_LIGASE_I"/>
    <property type="match status" value="1"/>
</dbReference>
<keyword id="KW-0030">Aminoacyl-tRNA synthetase</keyword>
<keyword id="KW-0067">ATP-binding</keyword>
<keyword id="KW-0963">Cytoplasm</keyword>
<keyword id="KW-0436">Ligase</keyword>
<keyword id="KW-0547">Nucleotide-binding</keyword>
<keyword id="KW-0648">Protein biosynthesis</keyword>
<gene>
    <name evidence="1" type="primary">argS</name>
    <name type="ordered locus">Mbar_A1008</name>
</gene>
<protein>
    <recommendedName>
        <fullName evidence="1">Arginine--tRNA ligase</fullName>
        <ecNumber evidence="1">6.1.1.19</ecNumber>
    </recommendedName>
    <alternativeName>
        <fullName evidence="1">Arginyl-tRNA synthetase</fullName>
        <shortName evidence="1">ArgRS</shortName>
    </alternativeName>
</protein>
<name>SYR_METBF</name>
<reference key="1">
    <citation type="journal article" date="2006" name="J. Bacteriol.">
        <title>The Methanosarcina barkeri genome: comparative analysis with Methanosarcina acetivorans and Methanosarcina mazei reveals extensive rearrangement within methanosarcinal genomes.</title>
        <authorList>
            <person name="Maeder D.L."/>
            <person name="Anderson I."/>
            <person name="Brettin T.S."/>
            <person name="Bruce D.C."/>
            <person name="Gilna P."/>
            <person name="Han C.S."/>
            <person name="Lapidus A."/>
            <person name="Metcalf W.W."/>
            <person name="Saunders E."/>
            <person name="Tapia R."/>
            <person name="Sowers K.R."/>
        </authorList>
    </citation>
    <scope>NUCLEOTIDE SEQUENCE [LARGE SCALE GENOMIC DNA]</scope>
    <source>
        <strain>Fusaro / DSM 804</strain>
    </source>
</reference>
<sequence length="569" mass="63401">MFLELKAQATSILKDAIQKAGLEIEDSELYFETSSYADLASRAAFRLASLYRQNPKELATRIVSAVEIPDGSYIGKVSASGPYINFHASRRYMDKTVATVLEEKEKFGCGAPKDKILLEHTSANPNGPLHVGHIRNSIIGDTLARILRRAGYDVEVQYYVNDMGRQIAVVSWACERFELDLSRKSDSAIADVYIKANVELDKNPEYVKEIDALMEKVEAGDVKTIDSFYKAVSLAISGIKETLLRLNVVHDKFVSESTFLKSGAVHDIVERIKATGRTKTDKGALVVDLSDYGFKKTLVIQRSNGTSLYTTRDLAYHEWKAGQADRIIDIFGADHKLISGQLRATLNSIGVKEPEVVIFEFVSLPEGSMSTRRGQFISADELFDRVTEAALEQVETRRPETSEEFKKQVAEMVGIGAVRYDIVRVSPEKSTVFNWKEALDFEKQGAPYIQYSHARACSILEKAKEEAAWNSSAEIDPSLLVEDTEIDLIKKMASFDRVIDLAARELKPHVLAIYARELADAFNQFYRFVPVIAAEDEKVRASRLALVNCARIVLANSLDTLGIAAPESM</sequence>
<evidence type="ECO:0000255" key="1">
    <source>
        <dbReference type="HAMAP-Rule" id="MF_00123"/>
    </source>
</evidence>
<organism>
    <name type="scientific">Methanosarcina barkeri (strain Fusaro / DSM 804)</name>
    <dbReference type="NCBI Taxonomy" id="269797"/>
    <lineage>
        <taxon>Archaea</taxon>
        <taxon>Methanobacteriati</taxon>
        <taxon>Methanobacteriota</taxon>
        <taxon>Stenosarchaea group</taxon>
        <taxon>Methanomicrobia</taxon>
        <taxon>Methanosarcinales</taxon>
        <taxon>Methanosarcinaceae</taxon>
        <taxon>Methanosarcina</taxon>
    </lineage>
</organism>
<accession>Q46DR6</accession>